<gene>
    <name evidence="1" type="primary">xerD</name>
    <name type="ordered locus">ML1365</name>
    <name type="ORF">MLC1351.07c</name>
    <name type="ORF">u0247d</name>
</gene>
<evidence type="ECO:0000255" key="1">
    <source>
        <dbReference type="HAMAP-Rule" id="MF_01807"/>
    </source>
</evidence>
<evidence type="ECO:0000255" key="2">
    <source>
        <dbReference type="PROSITE-ProRule" id="PRU01246"/>
    </source>
</evidence>
<evidence type="ECO:0000255" key="3">
    <source>
        <dbReference type="PROSITE-ProRule" id="PRU01248"/>
    </source>
</evidence>
<evidence type="ECO:0000305" key="4"/>
<feature type="chain" id="PRO_0000095397" description="Tyrosine recombinase XerD">
    <location>
        <begin position="1"/>
        <end position="316"/>
    </location>
</feature>
<feature type="domain" description="Core-binding (CB)" evidence="3">
    <location>
        <begin position="4"/>
        <end position="97"/>
    </location>
</feature>
<feature type="domain" description="Tyr recombinase" evidence="2">
    <location>
        <begin position="118"/>
        <end position="309"/>
    </location>
</feature>
<feature type="active site" evidence="1">
    <location>
        <position position="162"/>
    </location>
</feature>
<feature type="active site" evidence="1">
    <location>
        <position position="186"/>
    </location>
</feature>
<feature type="active site" evidence="1">
    <location>
        <position position="261"/>
    </location>
</feature>
<feature type="active site" evidence="1">
    <location>
        <position position="264"/>
    </location>
</feature>
<feature type="active site" evidence="1">
    <location>
        <position position="287"/>
    </location>
</feature>
<feature type="active site" description="O-(3'-phospho-DNA)-tyrosine intermediate" evidence="1">
    <location>
        <position position="296"/>
    </location>
</feature>
<feature type="sequence conflict" description="In Ref. 1; AAA50925." evidence="4" ref="1">
    <original>R</original>
    <variation>G</variation>
    <location>
        <position position="140"/>
    </location>
</feature>
<accession>Q49890</accession>
<accession>O05671</accession>
<dbReference type="EMBL" id="U00021">
    <property type="protein sequence ID" value="AAA50925.1"/>
    <property type="molecule type" value="Genomic_DNA"/>
</dbReference>
<dbReference type="EMBL" id="Z95117">
    <property type="protein sequence ID" value="CAB08282.1"/>
    <property type="molecule type" value="Genomic_DNA"/>
</dbReference>
<dbReference type="EMBL" id="AL583921">
    <property type="protein sequence ID" value="CAC31746.1"/>
    <property type="molecule type" value="Genomic_DNA"/>
</dbReference>
<dbReference type="PIR" id="G87079">
    <property type="entry name" value="G87079"/>
</dbReference>
<dbReference type="PIR" id="S72959">
    <property type="entry name" value="S72959"/>
</dbReference>
<dbReference type="RefSeq" id="NP_301974.1">
    <property type="nucleotide sequence ID" value="NC_002677.1"/>
</dbReference>
<dbReference type="RefSeq" id="WP_010908295.1">
    <property type="nucleotide sequence ID" value="NC_002677.1"/>
</dbReference>
<dbReference type="SMR" id="Q49890"/>
<dbReference type="STRING" id="272631.gene:17575203"/>
<dbReference type="KEGG" id="mle:ML1365"/>
<dbReference type="PATRIC" id="fig|272631.5.peg.2523"/>
<dbReference type="Leproma" id="ML1365"/>
<dbReference type="eggNOG" id="COG4974">
    <property type="taxonomic scope" value="Bacteria"/>
</dbReference>
<dbReference type="HOGENOM" id="CLU_027562_9_0_11"/>
<dbReference type="OrthoDB" id="9801717at2"/>
<dbReference type="Proteomes" id="UP000000806">
    <property type="component" value="Chromosome"/>
</dbReference>
<dbReference type="GO" id="GO:0005737">
    <property type="term" value="C:cytoplasm"/>
    <property type="evidence" value="ECO:0007669"/>
    <property type="project" value="UniProtKB-SubCell"/>
</dbReference>
<dbReference type="GO" id="GO:0003677">
    <property type="term" value="F:DNA binding"/>
    <property type="evidence" value="ECO:0007669"/>
    <property type="project" value="UniProtKB-KW"/>
</dbReference>
<dbReference type="GO" id="GO:0009037">
    <property type="term" value="F:tyrosine-based site-specific recombinase activity"/>
    <property type="evidence" value="ECO:0007669"/>
    <property type="project" value="UniProtKB-UniRule"/>
</dbReference>
<dbReference type="GO" id="GO:0051301">
    <property type="term" value="P:cell division"/>
    <property type="evidence" value="ECO:0007669"/>
    <property type="project" value="UniProtKB-KW"/>
</dbReference>
<dbReference type="GO" id="GO:0007059">
    <property type="term" value="P:chromosome segregation"/>
    <property type="evidence" value="ECO:0007669"/>
    <property type="project" value="UniProtKB-UniRule"/>
</dbReference>
<dbReference type="GO" id="GO:0006313">
    <property type="term" value="P:DNA transposition"/>
    <property type="evidence" value="ECO:0007669"/>
    <property type="project" value="UniProtKB-UniRule"/>
</dbReference>
<dbReference type="CDD" id="cd00798">
    <property type="entry name" value="INT_XerDC_C"/>
    <property type="match status" value="1"/>
</dbReference>
<dbReference type="Gene3D" id="1.10.150.130">
    <property type="match status" value="1"/>
</dbReference>
<dbReference type="Gene3D" id="1.10.443.10">
    <property type="entry name" value="Intergrase catalytic core"/>
    <property type="match status" value="1"/>
</dbReference>
<dbReference type="HAMAP" id="MF_01808">
    <property type="entry name" value="Recomb_XerC_XerD"/>
    <property type="match status" value="1"/>
</dbReference>
<dbReference type="HAMAP" id="MF_01807">
    <property type="entry name" value="Recomb_XerD"/>
    <property type="match status" value="1"/>
</dbReference>
<dbReference type="InterPro" id="IPR044068">
    <property type="entry name" value="CB"/>
</dbReference>
<dbReference type="InterPro" id="IPR011010">
    <property type="entry name" value="DNA_brk_join_enz"/>
</dbReference>
<dbReference type="InterPro" id="IPR013762">
    <property type="entry name" value="Integrase-like_cat_sf"/>
</dbReference>
<dbReference type="InterPro" id="IPR002104">
    <property type="entry name" value="Integrase_catalytic"/>
</dbReference>
<dbReference type="InterPro" id="IPR010998">
    <property type="entry name" value="Integrase_recombinase_N"/>
</dbReference>
<dbReference type="InterPro" id="IPR004107">
    <property type="entry name" value="Integrase_SAM-like_N"/>
</dbReference>
<dbReference type="InterPro" id="IPR011932">
    <property type="entry name" value="Recomb_XerD"/>
</dbReference>
<dbReference type="InterPro" id="IPR023009">
    <property type="entry name" value="Tyrosine_recombinase_XerC/XerD"/>
</dbReference>
<dbReference type="InterPro" id="IPR050090">
    <property type="entry name" value="Tyrosine_recombinase_XerCD"/>
</dbReference>
<dbReference type="NCBIfam" id="NF001399">
    <property type="entry name" value="PRK00283.1"/>
    <property type="match status" value="1"/>
</dbReference>
<dbReference type="NCBIfam" id="TIGR02225">
    <property type="entry name" value="recomb_XerD"/>
    <property type="match status" value="1"/>
</dbReference>
<dbReference type="PANTHER" id="PTHR30349">
    <property type="entry name" value="PHAGE INTEGRASE-RELATED"/>
    <property type="match status" value="1"/>
</dbReference>
<dbReference type="PANTHER" id="PTHR30349:SF81">
    <property type="entry name" value="TYROSINE RECOMBINASE XERC"/>
    <property type="match status" value="1"/>
</dbReference>
<dbReference type="Pfam" id="PF02899">
    <property type="entry name" value="Phage_int_SAM_1"/>
    <property type="match status" value="1"/>
</dbReference>
<dbReference type="Pfam" id="PF00589">
    <property type="entry name" value="Phage_integrase"/>
    <property type="match status" value="1"/>
</dbReference>
<dbReference type="SUPFAM" id="SSF56349">
    <property type="entry name" value="DNA breaking-rejoining enzymes"/>
    <property type="match status" value="1"/>
</dbReference>
<dbReference type="SUPFAM" id="SSF47823">
    <property type="entry name" value="lambda integrase-like, N-terminal domain"/>
    <property type="match status" value="1"/>
</dbReference>
<dbReference type="PROSITE" id="PS51900">
    <property type="entry name" value="CB"/>
    <property type="match status" value="1"/>
</dbReference>
<dbReference type="PROSITE" id="PS51898">
    <property type="entry name" value="TYR_RECOMBINASE"/>
    <property type="match status" value="1"/>
</dbReference>
<sequence>MTTAALQTQLQGYLDYLIIERSIAANTLSSYRRDLIRYSKHLSDRGIEDLAKVGEHDVSEFLVALRRGDPDSGVAALSAVSAARALIAVRGLHRFAVAEGLVDLDVARAVRPPTPGRRLPKSLTVDEVLALLESVGGESRADGPLVLRNRALLELLYSTGSRISEAVGLDVDDVDTQARTVLLQGKGGKQRLVPVGRPAVQALDAYLVRGRSDLARRGPGMLATPAIFLNARGGRLSRQSAWQVLQDAAEHAGITSGVSPHMLRHSFATHLLEGGADIRVVQELMGHASVTTTQIYTLVTVQALREVWAGAHPRAK</sequence>
<proteinExistence type="inferred from homology"/>
<organism>
    <name type="scientific">Mycobacterium leprae (strain TN)</name>
    <dbReference type="NCBI Taxonomy" id="272631"/>
    <lineage>
        <taxon>Bacteria</taxon>
        <taxon>Bacillati</taxon>
        <taxon>Actinomycetota</taxon>
        <taxon>Actinomycetes</taxon>
        <taxon>Mycobacteriales</taxon>
        <taxon>Mycobacteriaceae</taxon>
        <taxon>Mycobacterium</taxon>
    </lineage>
</organism>
<protein>
    <recommendedName>
        <fullName evidence="1">Tyrosine recombinase XerD</fullName>
    </recommendedName>
</protein>
<name>XERD_MYCLE</name>
<comment type="function">
    <text evidence="1">Site-specific tyrosine recombinase, which acts by catalyzing the cutting and rejoining of the recombining DNA molecules. The XerC-XerD complex is essential to convert dimers of the bacterial chromosome into monomers to permit their segregation at cell division. It also contributes to the segregational stability of plasmids.</text>
</comment>
<comment type="subunit">
    <text evidence="1">Forms a cyclic heterotetrameric complex composed of two molecules of XerC and two molecules of XerD.</text>
</comment>
<comment type="subcellular location">
    <subcellularLocation>
        <location evidence="1">Cytoplasm</location>
    </subcellularLocation>
</comment>
<comment type="similarity">
    <text evidence="1">Belongs to the 'phage' integrase family. XerD subfamily.</text>
</comment>
<keyword id="KW-0131">Cell cycle</keyword>
<keyword id="KW-0132">Cell division</keyword>
<keyword id="KW-0159">Chromosome partition</keyword>
<keyword id="KW-0963">Cytoplasm</keyword>
<keyword id="KW-0229">DNA integration</keyword>
<keyword id="KW-0233">DNA recombination</keyword>
<keyword id="KW-0238">DNA-binding</keyword>
<keyword id="KW-1185">Reference proteome</keyword>
<reference key="1">
    <citation type="submission" date="1994-09" db="EMBL/GenBank/DDBJ databases">
        <authorList>
            <person name="Smith D.R."/>
            <person name="Robison K."/>
        </authorList>
    </citation>
    <scope>NUCLEOTIDE SEQUENCE [GENOMIC DNA]</scope>
</reference>
<reference key="2">
    <citation type="journal article" date="2001" name="Nature">
        <title>Massive gene decay in the leprosy bacillus.</title>
        <authorList>
            <person name="Cole S.T."/>
            <person name="Eiglmeier K."/>
            <person name="Parkhill J."/>
            <person name="James K.D."/>
            <person name="Thomson N.R."/>
            <person name="Wheeler P.R."/>
            <person name="Honore N."/>
            <person name="Garnier T."/>
            <person name="Churcher C.M."/>
            <person name="Harris D.E."/>
            <person name="Mungall K.L."/>
            <person name="Basham D."/>
            <person name="Brown D."/>
            <person name="Chillingworth T."/>
            <person name="Connor R."/>
            <person name="Davies R.M."/>
            <person name="Devlin K."/>
            <person name="Duthoy S."/>
            <person name="Feltwell T."/>
            <person name="Fraser A."/>
            <person name="Hamlin N."/>
            <person name="Holroyd S."/>
            <person name="Hornsby T."/>
            <person name="Jagels K."/>
            <person name="Lacroix C."/>
            <person name="Maclean J."/>
            <person name="Moule S."/>
            <person name="Murphy L.D."/>
            <person name="Oliver K."/>
            <person name="Quail M.A."/>
            <person name="Rajandream M.A."/>
            <person name="Rutherford K.M."/>
            <person name="Rutter S."/>
            <person name="Seeger K."/>
            <person name="Simon S."/>
            <person name="Simmonds M."/>
            <person name="Skelton J."/>
            <person name="Squares R."/>
            <person name="Squares S."/>
            <person name="Stevens K."/>
            <person name="Taylor K."/>
            <person name="Whitehead S."/>
            <person name="Woodward J.R."/>
            <person name="Barrell B.G."/>
        </authorList>
    </citation>
    <scope>NUCLEOTIDE SEQUENCE [LARGE SCALE GENOMIC DNA]</scope>
    <source>
        <strain>TN</strain>
    </source>
</reference>